<proteinExistence type="inferred from homology"/>
<evidence type="ECO:0000250" key="1"/>
<evidence type="ECO:0000255" key="2">
    <source>
        <dbReference type="HAMAP-Rule" id="MF_00103"/>
    </source>
</evidence>
<dbReference type="EC" id="3.2.2.23" evidence="2"/>
<dbReference type="EC" id="4.2.99.18" evidence="2"/>
<dbReference type="EMBL" id="CP000086">
    <property type="protein sequence ID" value="ABC38459.1"/>
    <property type="molecule type" value="Genomic_DNA"/>
</dbReference>
<dbReference type="RefSeq" id="WP_009893062.1">
    <property type="nucleotide sequence ID" value="NZ_CP008785.1"/>
</dbReference>
<dbReference type="SMR" id="Q2T1B3"/>
<dbReference type="GeneID" id="45120242"/>
<dbReference type="KEGG" id="bte:BTH_I0479"/>
<dbReference type="HOGENOM" id="CLU_038423_1_1_4"/>
<dbReference type="Proteomes" id="UP000001930">
    <property type="component" value="Chromosome I"/>
</dbReference>
<dbReference type="GO" id="GO:0034039">
    <property type="term" value="F:8-oxo-7,8-dihydroguanine DNA N-glycosylase activity"/>
    <property type="evidence" value="ECO:0007669"/>
    <property type="project" value="TreeGrafter"/>
</dbReference>
<dbReference type="GO" id="GO:0140078">
    <property type="term" value="F:class I DNA-(apurinic or apyrimidinic site) endonuclease activity"/>
    <property type="evidence" value="ECO:0007669"/>
    <property type="project" value="UniProtKB-EC"/>
</dbReference>
<dbReference type="GO" id="GO:0003684">
    <property type="term" value="F:damaged DNA binding"/>
    <property type="evidence" value="ECO:0007669"/>
    <property type="project" value="InterPro"/>
</dbReference>
<dbReference type="GO" id="GO:0008270">
    <property type="term" value="F:zinc ion binding"/>
    <property type="evidence" value="ECO:0007669"/>
    <property type="project" value="UniProtKB-UniRule"/>
</dbReference>
<dbReference type="GO" id="GO:0006284">
    <property type="term" value="P:base-excision repair"/>
    <property type="evidence" value="ECO:0007669"/>
    <property type="project" value="InterPro"/>
</dbReference>
<dbReference type="CDD" id="cd08966">
    <property type="entry name" value="EcFpg-like_N"/>
    <property type="match status" value="1"/>
</dbReference>
<dbReference type="FunFam" id="1.10.8.50:FF:000003">
    <property type="entry name" value="Formamidopyrimidine-DNA glycosylase"/>
    <property type="match status" value="1"/>
</dbReference>
<dbReference type="FunFam" id="3.20.190.10:FF:000001">
    <property type="entry name" value="Formamidopyrimidine-DNA glycosylase"/>
    <property type="match status" value="1"/>
</dbReference>
<dbReference type="Gene3D" id="1.10.8.50">
    <property type="match status" value="1"/>
</dbReference>
<dbReference type="Gene3D" id="3.20.190.10">
    <property type="entry name" value="MutM-like, N-terminal"/>
    <property type="match status" value="1"/>
</dbReference>
<dbReference type="HAMAP" id="MF_00103">
    <property type="entry name" value="Fapy_DNA_glycosyl"/>
    <property type="match status" value="1"/>
</dbReference>
<dbReference type="InterPro" id="IPR015886">
    <property type="entry name" value="DNA_glyclase/AP_lyase_DNA-bd"/>
</dbReference>
<dbReference type="InterPro" id="IPR015887">
    <property type="entry name" value="DNA_glyclase_Znf_dom_DNA_BS"/>
</dbReference>
<dbReference type="InterPro" id="IPR020629">
    <property type="entry name" value="Formamido-pyr_DNA_Glyclase"/>
</dbReference>
<dbReference type="InterPro" id="IPR012319">
    <property type="entry name" value="FPG_cat"/>
</dbReference>
<dbReference type="InterPro" id="IPR035937">
    <property type="entry name" value="MutM-like_N-ter"/>
</dbReference>
<dbReference type="InterPro" id="IPR010979">
    <property type="entry name" value="Ribosomal_uS13-like_H2TH"/>
</dbReference>
<dbReference type="InterPro" id="IPR000214">
    <property type="entry name" value="Znf_DNA_glyclase/AP_lyase"/>
</dbReference>
<dbReference type="InterPro" id="IPR010663">
    <property type="entry name" value="Znf_FPG/IleRS"/>
</dbReference>
<dbReference type="NCBIfam" id="TIGR00577">
    <property type="entry name" value="fpg"/>
    <property type="match status" value="1"/>
</dbReference>
<dbReference type="NCBIfam" id="NF002211">
    <property type="entry name" value="PRK01103.1"/>
    <property type="match status" value="1"/>
</dbReference>
<dbReference type="PANTHER" id="PTHR22993">
    <property type="entry name" value="FORMAMIDOPYRIMIDINE-DNA GLYCOSYLASE"/>
    <property type="match status" value="1"/>
</dbReference>
<dbReference type="PANTHER" id="PTHR22993:SF9">
    <property type="entry name" value="FORMAMIDOPYRIMIDINE-DNA GLYCOSYLASE"/>
    <property type="match status" value="1"/>
</dbReference>
<dbReference type="Pfam" id="PF01149">
    <property type="entry name" value="Fapy_DNA_glyco"/>
    <property type="match status" value="1"/>
</dbReference>
<dbReference type="Pfam" id="PF06831">
    <property type="entry name" value="H2TH"/>
    <property type="match status" value="1"/>
</dbReference>
<dbReference type="Pfam" id="PF06827">
    <property type="entry name" value="zf-FPG_IleRS"/>
    <property type="match status" value="1"/>
</dbReference>
<dbReference type="SMART" id="SM00898">
    <property type="entry name" value="Fapy_DNA_glyco"/>
    <property type="match status" value="1"/>
</dbReference>
<dbReference type="SMART" id="SM01232">
    <property type="entry name" value="H2TH"/>
    <property type="match status" value="1"/>
</dbReference>
<dbReference type="SUPFAM" id="SSF57716">
    <property type="entry name" value="Glucocorticoid receptor-like (DNA-binding domain)"/>
    <property type="match status" value="1"/>
</dbReference>
<dbReference type="SUPFAM" id="SSF81624">
    <property type="entry name" value="N-terminal domain of MutM-like DNA repair proteins"/>
    <property type="match status" value="1"/>
</dbReference>
<dbReference type="SUPFAM" id="SSF46946">
    <property type="entry name" value="S13-like H2TH domain"/>
    <property type="match status" value="1"/>
</dbReference>
<dbReference type="PROSITE" id="PS51068">
    <property type="entry name" value="FPG_CAT"/>
    <property type="match status" value="1"/>
</dbReference>
<dbReference type="PROSITE" id="PS01242">
    <property type="entry name" value="ZF_FPG_1"/>
    <property type="match status" value="1"/>
</dbReference>
<dbReference type="PROSITE" id="PS51066">
    <property type="entry name" value="ZF_FPG_2"/>
    <property type="match status" value="1"/>
</dbReference>
<name>FPG_BURTA</name>
<accession>Q2T1B3</accession>
<reference key="1">
    <citation type="journal article" date="2005" name="BMC Genomics">
        <title>Bacterial genome adaptation to niches: divergence of the potential virulence genes in three Burkholderia species of different survival strategies.</title>
        <authorList>
            <person name="Kim H.S."/>
            <person name="Schell M.A."/>
            <person name="Yu Y."/>
            <person name="Ulrich R.L."/>
            <person name="Sarria S.H."/>
            <person name="Nierman W.C."/>
            <person name="DeShazer D."/>
        </authorList>
    </citation>
    <scope>NUCLEOTIDE SEQUENCE [LARGE SCALE GENOMIC DNA]</scope>
    <source>
        <strain>ATCC 700388 / DSM 13276 / CCUG 48851 / CIP 106301 / E264</strain>
    </source>
</reference>
<sequence>MPELPEVEVTRRGIEPFVAGRRVERVDVRTAMLRWPVPADFAEMLRSREVLGVERRGKYLLFEVDAGWFIVHLGMTGTLRVLPNDAPPPAPAKHDHVDWVFDEFVLRFRDPRRFGAVLWHPRDAGDVRAHPLLASLGVEPFSAAFSGALLFKRTRGRTVSVKQALLAGDIVVGVGNIYASESLFRAGIRPTTAAGRVSLPRYERLADAVRATLADAIERGGSTLRDFVGSNGESGYFQLDCFVYDRAGEPCRVCGAPIRQIVQGQRSTYYCPNCQR</sequence>
<comment type="function">
    <text evidence="2">Involved in base excision repair of DNA damaged by oxidation or by mutagenic agents. Acts as a DNA glycosylase that recognizes and removes damaged bases. Has a preference for oxidized purines, such as 7,8-dihydro-8-oxoguanine (8-oxoG). Has AP (apurinic/apyrimidinic) lyase activity and introduces nicks in the DNA strand. Cleaves the DNA backbone by beta-delta elimination to generate a single-strand break at the site of the removed base with both 3'- and 5'-phosphates.</text>
</comment>
<comment type="catalytic activity">
    <reaction evidence="2">
        <text>Hydrolysis of DNA containing ring-opened 7-methylguanine residues, releasing 2,6-diamino-4-hydroxy-5-(N-methyl)formamidopyrimidine.</text>
        <dbReference type="EC" id="3.2.2.23"/>
    </reaction>
</comment>
<comment type="catalytic activity">
    <reaction evidence="2">
        <text>2'-deoxyribonucleotide-(2'-deoxyribose 5'-phosphate)-2'-deoxyribonucleotide-DNA = a 3'-end 2'-deoxyribonucleotide-(2,3-dehydro-2,3-deoxyribose 5'-phosphate)-DNA + a 5'-end 5'-phospho-2'-deoxyribonucleoside-DNA + H(+)</text>
        <dbReference type="Rhea" id="RHEA:66592"/>
        <dbReference type="Rhea" id="RHEA-COMP:13180"/>
        <dbReference type="Rhea" id="RHEA-COMP:16897"/>
        <dbReference type="Rhea" id="RHEA-COMP:17067"/>
        <dbReference type="ChEBI" id="CHEBI:15378"/>
        <dbReference type="ChEBI" id="CHEBI:136412"/>
        <dbReference type="ChEBI" id="CHEBI:157695"/>
        <dbReference type="ChEBI" id="CHEBI:167181"/>
        <dbReference type="EC" id="4.2.99.18"/>
    </reaction>
</comment>
<comment type="cofactor">
    <cofactor evidence="2">
        <name>Zn(2+)</name>
        <dbReference type="ChEBI" id="CHEBI:29105"/>
    </cofactor>
    <text evidence="2">Binds 1 zinc ion per subunit.</text>
</comment>
<comment type="subunit">
    <text evidence="2">Monomer.</text>
</comment>
<comment type="similarity">
    <text evidence="2">Belongs to the FPG family.</text>
</comment>
<protein>
    <recommendedName>
        <fullName evidence="2">Formamidopyrimidine-DNA glycosylase</fullName>
        <shortName evidence="2">Fapy-DNA glycosylase</shortName>
        <ecNumber evidence="2">3.2.2.23</ecNumber>
    </recommendedName>
    <alternativeName>
        <fullName evidence="2">DNA-(apurinic or apyrimidinic site) lyase MutM</fullName>
        <shortName evidence="2">AP lyase MutM</shortName>
        <ecNumber evidence="2">4.2.99.18</ecNumber>
    </alternativeName>
</protein>
<gene>
    <name evidence="2" type="primary">mutM</name>
    <name evidence="2" type="synonym">fpg</name>
    <name type="ordered locus">BTH_I0479</name>
</gene>
<organism>
    <name type="scientific">Burkholderia thailandensis (strain ATCC 700388 / DSM 13276 / CCUG 48851 / CIP 106301 / E264)</name>
    <dbReference type="NCBI Taxonomy" id="271848"/>
    <lineage>
        <taxon>Bacteria</taxon>
        <taxon>Pseudomonadati</taxon>
        <taxon>Pseudomonadota</taxon>
        <taxon>Betaproteobacteria</taxon>
        <taxon>Burkholderiales</taxon>
        <taxon>Burkholderiaceae</taxon>
        <taxon>Burkholderia</taxon>
        <taxon>pseudomallei group</taxon>
    </lineage>
</organism>
<feature type="initiator methionine" description="Removed" evidence="1">
    <location>
        <position position="1"/>
    </location>
</feature>
<feature type="chain" id="PRO_1000008687" description="Formamidopyrimidine-DNA glycosylase">
    <location>
        <begin position="2"/>
        <end position="276"/>
    </location>
</feature>
<feature type="zinc finger region" description="FPG-type" evidence="2">
    <location>
        <begin position="242"/>
        <end position="276"/>
    </location>
</feature>
<feature type="active site" description="Schiff-base intermediate with DNA" evidence="2">
    <location>
        <position position="2"/>
    </location>
</feature>
<feature type="active site" description="Proton donor" evidence="2">
    <location>
        <position position="3"/>
    </location>
</feature>
<feature type="active site" description="Proton donor; for beta-elimination activity" evidence="2">
    <location>
        <position position="58"/>
    </location>
</feature>
<feature type="active site" description="Proton donor; for delta-elimination activity" evidence="2">
    <location>
        <position position="266"/>
    </location>
</feature>
<feature type="binding site" evidence="2">
    <location>
        <position position="94"/>
    </location>
    <ligand>
        <name>DNA</name>
        <dbReference type="ChEBI" id="CHEBI:16991"/>
    </ligand>
</feature>
<feature type="binding site" evidence="2">
    <location>
        <position position="112"/>
    </location>
    <ligand>
        <name>DNA</name>
        <dbReference type="ChEBI" id="CHEBI:16991"/>
    </ligand>
</feature>
<feature type="binding site" evidence="2">
    <location>
        <position position="157"/>
    </location>
    <ligand>
        <name>DNA</name>
        <dbReference type="ChEBI" id="CHEBI:16991"/>
    </ligand>
</feature>
<keyword id="KW-0227">DNA damage</keyword>
<keyword id="KW-0234">DNA repair</keyword>
<keyword id="KW-0238">DNA-binding</keyword>
<keyword id="KW-0326">Glycosidase</keyword>
<keyword id="KW-0378">Hydrolase</keyword>
<keyword id="KW-0456">Lyase</keyword>
<keyword id="KW-0479">Metal-binding</keyword>
<keyword id="KW-0511">Multifunctional enzyme</keyword>
<keyword id="KW-0862">Zinc</keyword>
<keyword id="KW-0863">Zinc-finger</keyword>